<dbReference type="EMBL" id="CP000435">
    <property type="protein sequence ID" value="ABI45739.1"/>
    <property type="molecule type" value="Genomic_DNA"/>
</dbReference>
<dbReference type="RefSeq" id="WP_011618180.1">
    <property type="nucleotide sequence ID" value="NC_008319.1"/>
</dbReference>
<dbReference type="SMR" id="Q0IDP0"/>
<dbReference type="STRING" id="64471.sync_0195"/>
<dbReference type="KEGG" id="syg:sync_0195"/>
<dbReference type="eggNOG" id="COG0806">
    <property type="taxonomic scope" value="Bacteria"/>
</dbReference>
<dbReference type="HOGENOM" id="CLU_077636_3_0_3"/>
<dbReference type="OrthoDB" id="9810331at2"/>
<dbReference type="Proteomes" id="UP000001961">
    <property type="component" value="Chromosome"/>
</dbReference>
<dbReference type="GO" id="GO:0005737">
    <property type="term" value="C:cytoplasm"/>
    <property type="evidence" value="ECO:0007669"/>
    <property type="project" value="UniProtKB-SubCell"/>
</dbReference>
<dbReference type="GO" id="GO:0005840">
    <property type="term" value="C:ribosome"/>
    <property type="evidence" value="ECO:0007669"/>
    <property type="project" value="InterPro"/>
</dbReference>
<dbReference type="GO" id="GO:0043022">
    <property type="term" value="F:ribosome binding"/>
    <property type="evidence" value="ECO:0007669"/>
    <property type="project" value="InterPro"/>
</dbReference>
<dbReference type="GO" id="GO:0042274">
    <property type="term" value="P:ribosomal small subunit biogenesis"/>
    <property type="evidence" value="ECO:0007669"/>
    <property type="project" value="UniProtKB-UniRule"/>
</dbReference>
<dbReference type="GO" id="GO:0006364">
    <property type="term" value="P:rRNA processing"/>
    <property type="evidence" value="ECO:0007669"/>
    <property type="project" value="UniProtKB-UniRule"/>
</dbReference>
<dbReference type="Gene3D" id="2.30.30.240">
    <property type="entry name" value="PRC-barrel domain"/>
    <property type="match status" value="1"/>
</dbReference>
<dbReference type="Gene3D" id="2.40.30.60">
    <property type="entry name" value="RimM"/>
    <property type="match status" value="1"/>
</dbReference>
<dbReference type="HAMAP" id="MF_00014">
    <property type="entry name" value="Ribosome_mat_RimM"/>
    <property type="match status" value="1"/>
</dbReference>
<dbReference type="InterPro" id="IPR011033">
    <property type="entry name" value="PRC_barrel-like_sf"/>
</dbReference>
<dbReference type="InterPro" id="IPR056792">
    <property type="entry name" value="PRC_RimM"/>
</dbReference>
<dbReference type="InterPro" id="IPR011961">
    <property type="entry name" value="RimM"/>
</dbReference>
<dbReference type="InterPro" id="IPR002676">
    <property type="entry name" value="RimM_N"/>
</dbReference>
<dbReference type="InterPro" id="IPR036976">
    <property type="entry name" value="RimM_N_sf"/>
</dbReference>
<dbReference type="InterPro" id="IPR009000">
    <property type="entry name" value="Transl_B-barrel_sf"/>
</dbReference>
<dbReference type="NCBIfam" id="TIGR02273">
    <property type="entry name" value="16S_RimM"/>
    <property type="match status" value="1"/>
</dbReference>
<dbReference type="PANTHER" id="PTHR33692">
    <property type="entry name" value="RIBOSOME MATURATION FACTOR RIMM"/>
    <property type="match status" value="1"/>
</dbReference>
<dbReference type="PANTHER" id="PTHR33692:SF1">
    <property type="entry name" value="RIBOSOME MATURATION FACTOR RIMM"/>
    <property type="match status" value="1"/>
</dbReference>
<dbReference type="Pfam" id="PF24986">
    <property type="entry name" value="PRC_RimM"/>
    <property type="match status" value="1"/>
</dbReference>
<dbReference type="Pfam" id="PF01782">
    <property type="entry name" value="RimM"/>
    <property type="match status" value="1"/>
</dbReference>
<dbReference type="SUPFAM" id="SSF50346">
    <property type="entry name" value="PRC-barrel domain"/>
    <property type="match status" value="1"/>
</dbReference>
<dbReference type="SUPFAM" id="SSF50447">
    <property type="entry name" value="Translation proteins"/>
    <property type="match status" value="1"/>
</dbReference>
<accession>Q0IDP0</accession>
<keyword id="KW-0143">Chaperone</keyword>
<keyword id="KW-0963">Cytoplasm</keyword>
<keyword id="KW-1185">Reference proteome</keyword>
<keyword id="KW-0690">Ribosome biogenesis</keyword>
<keyword id="KW-0698">rRNA processing</keyword>
<sequence>MTSTPSPSTADPNSTNDWLPVGTLVGAQGLKGELRLNPASDFPERFTEPGTRWLQAKGSAPKEVELLEGRQLPGKSLYVVRLKGVNNRASAEALVGCTVLVPAKDRPELAEGEFHLLDLVGLEARLAGSDEPIGTVSNLISGGNDLLEIKLNSGKTVLVPFVEAIVPDVQLEEGWLLLTPPPGLLEL</sequence>
<name>RIMM_SYNS3</name>
<feature type="chain" id="PRO_0000351801" description="Ribosome maturation factor RimM">
    <location>
        <begin position="1"/>
        <end position="187"/>
    </location>
</feature>
<feature type="domain" description="PRC barrel" evidence="1">
    <location>
        <begin position="111"/>
        <end position="184"/>
    </location>
</feature>
<feature type="region of interest" description="Disordered" evidence="2">
    <location>
        <begin position="1"/>
        <end position="21"/>
    </location>
</feature>
<feature type="compositionally biased region" description="Polar residues" evidence="2">
    <location>
        <begin position="1"/>
        <end position="17"/>
    </location>
</feature>
<protein>
    <recommendedName>
        <fullName evidence="1">Ribosome maturation factor RimM</fullName>
    </recommendedName>
</protein>
<comment type="function">
    <text evidence="1">An accessory protein needed during the final step in the assembly of 30S ribosomal subunit, possibly for assembly of the head region. Essential for efficient processing of 16S rRNA. May be needed both before and after RbfA during the maturation of 16S rRNA. It has affinity for free ribosomal 30S subunits but not for 70S ribosomes.</text>
</comment>
<comment type="subunit">
    <text evidence="1">Binds ribosomal protein uS19.</text>
</comment>
<comment type="subcellular location">
    <subcellularLocation>
        <location evidence="1">Cytoplasm</location>
    </subcellularLocation>
</comment>
<comment type="domain">
    <text evidence="1">The PRC barrel domain binds ribosomal protein uS19.</text>
</comment>
<comment type="similarity">
    <text evidence="1">Belongs to the RimM family.</text>
</comment>
<proteinExistence type="inferred from homology"/>
<gene>
    <name evidence="1" type="primary">rimM</name>
    <name type="ordered locus">sync_0195</name>
</gene>
<reference key="1">
    <citation type="journal article" date="2006" name="Proc. Natl. Acad. Sci. U.S.A.">
        <title>Genome sequence of Synechococcus CC9311: insights into adaptation to a coastal environment.</title>
        <authorList>
            <person name="Palenik B."/>
            <person name="Ren Q."/>
            <person name="Dupont C.L."/>
            <person name="Myers G.S."/>
            <person name="Heidelberg J.F."/>
            <person name="Badger J.H."/>
            <person name="Madupu R."/>
            <person name="Nelson W.C."/>
            <person name="Brinkac L.M."/>
            <person name="Dodson R.J."/>
            <person name="Durkin A.S."/>
            <person name="Daugherty S.C."/>
            <person name="Sullivan S.A."/>
            <person name="Khouri H."/>
            <person name="Mohamoud Y."/>
            <person name="Halpin R."/>
            <person name="Paulsen I.T."/>
        </authorList>
    </citation>
    <scope>NUCLEOTIDE SEQUENCE [LARGE SCALE GENOMIC DNA]</scope>
    <source>
        <strain>CC9311</strain>
    </source>
</reference>
<evidence type="ECO:0000255" key="1">
    <source>
        <dbReference type="HAMAP-Rule" id="MF_00014"/>
    </source>
</evidence>
<evidence type="ECO:0000256" key="2">
    <source>
        <dbReference type="SAM" id="MobiDB-lite"/>
    </source>
</evidence>
<organism>
    <name type="scientific">Synechococcus sp. (strain CC9311)</name>
    <dbReference type="NCBI Taxonomy" id="64471"/>
    <lineage>
        <taxon>Bacteria</taxon>
        <taxon>Bacillati</taxon>
        <taxon>Cyanobacteriota</taxon>
        <taxon>Cyanophyceae</taxon>
        <taxon>Synechococcales</taxon>
        <taxon>Synechococcaceae</taxon>
        <taxon>Synechococcus</taxon>
    </lineage>
</organism>